<comment type="function">
    <text evidence="19 26">Thiol protease (PubMed:1586157). Has dipeptidylpeptidase activity (PubMed:1586157). Active against a broad range of dipeptide substrates composed of both polar and hydrophobic amino acids (PubMed:1586157). Proline cannot occupy the P1 position and arginine cannot occupy the P2 position of the substrate (PubMed:1586157). Can act as both an exopeptidase and endopeptidase (PubMed:1586157). Activates serine proteases such as elastase, cathepsin G and granzymes A and B (PubMed:8428921).</text>
</comment>
<comment type="catalytic activity">
    <reaction evidence="19">
        <text>Release of an N-terminal dipeptide, Xaa-Yaa-|-Zaa-, except when Xaa is Arg or Lys, or Yaa or Zaa is Pro.</text>
        <dbReference type="EC" id="3.4.14.1"/>
    </reaction>
</comment>
<comment type="cofactor">
    <cofactor evidence="12">
        <name>chloride</name>
        <dbReference type="ChEBI" id="CHEBI:17996"/>
    </cofactor>
    <text evidence="12">Binds 1 Cl(-) ion per heavy chain.</text>
</comment>
<comment type="activity regulation">
    <text evidence="19">Strongly inhibited by the cysteine peptidase inhibitors mersalyl acid, iodoacetic acid and cystatin. Inhibited by N-ethylmaleimide, Gly-Phe-diazomethane, TLCK, TPCK and, at low pH, by dithiodipyridine. Not inhibited by the serine peptidase inhibitor PMSF, the aminopeptidase inhibitor bestatin, or metal ion chelators.</text>
</comment>
<comment type="biophysicochemical properties">
    <phDependence>
        <text evidence="19">High activity at pH 4.5-6.8.</text>
    </phDependence>
</comment>
<comment type="subunit">
    <text evidence="12 19">Tetramer of heterotrimers consisting of exclusion domain, heavy- and light chains.</text>
</comment>
<comment type="interaction">
    <interactant intactId="EBI-1047323">
        <id>P53634</id>
    </interactant>
    <interactant intactId="EBI-2807448">
        <id>O76096</id>
        <label>CST7</label>
    </interactant>
    <organismsDiffer>false</organismsDiffer>
    <experiments>2</experiments>
</comment>
<comment type="interaction">
    <interactant intactId="EBI-1047323">
        <id>P53634</id>
    </interactant>
    <interactant intactId="EBI-10976677">
        <id>G5E9A7</id>
        <label>DMWD</label>
    </interactant>
    <organismsDiffer>false</organismsDiffer>
    <experiments>3</experiments>
</comment>
<comment type="interaction">
    <interactant intactId="EBI-1047323">
        <id>P53634</id>
    </interactant>
    <interactant intactId="EBI-5235340">
        <id>Q7Z699</id>
        <label>SPRED1</label>
    </interactant>
    <organismsDiffer>false</organismsDiffer>
    <experiments>3</experiments>
</comment>
<comment type="subcellular location">
    <subcellularLocation>
        <location evidence="35">Lysosome</location>
    </subcellularLocation>
</comment>
<comment type="alternative products">
    <event type="alternative splicing"/>
    <isoform>
        <id>P53634-1</id>
        <name>1</name>
        <sequence type="displayed"/>
    </isoform>
    <isoform>
        <id>P53634-2</id>
        <name>2</name>
        <sequence type="described" ref="VSP_039123 VSP_039124"/>
    </isoform>
    <isoform>
        <id>P53634-3</id>
        <name>3</name>
        <sequence type="described" ref="VSP_043232 VSP_043233"/>
    </isoform>
</comment>
<comment type="tissue specificity">
    <text evidence="27">Ubiquitous. Highly expressed in lung, kidney and placenta. Detected at intermediate levels in colon, small intestine, spleen and pancreas.</text>
</comment>
<comment type="induction">
    <text evidence="27">Up-regulated in lymphocytes by IL2/interleukin-2.</text>
</comment>
<comment type="PTM">
    <text evidence="12 19 21 22 28">N-glycosylated. While glycosylation at Asn-53, Asn-119 and Asn-276 is mediated by STT3A-containing complexes, glycosylation at Asn-29 is mediated STT3B-containing complexes.</text>
</comment>
<comment type="PTM">
    <text>In approximately 50% of the complexes the exclusion domain is cleaved at position 58 or 61. The two parts of the exclusion domain are held together by a disulfide bond.</text>
</comment>
<comment type="disease" evidence="4 6 8 9 10 11 13 14 15 17 18 20 23">
    <disease id="DI-00900">
        <name>Papillon-Lefevre syndrome</name>
        <acronym>PLS</acronym>
        <description>An autosomal recessive disorder characterized by palmoplantar keratosis and severe periodontitis affecting deciduous and permanent dentitions and resulting in premature tooth loss. The palmoplantar keratotic phenotype vary from mild psoriasiform scaly skin to overt hyperkeratosis. Keratosis also affects other sites such as elbows and knees.</description>
        <dbReference type="MIM" id="245000"/>
    </disease>
    <text>The disease is caused by variants affecting the gene represented in this entry.</text>
</comment>
<comment type="disease" evidence="5">
    <disease id="DI-00539">
        <name>Haim-Munk syndrome</name>
        <acronym>HMS</acronym>
        <description>An autosomal recessive disorder characterized by palmoplantar keratosis, onychogryphosis and periodontitis. Additional features are pes planus, arachnodactyly, and acroosteolysis.</description>
        <dbReference type="MIM" id="245010"/>
    </disease>
    <text>The disease is caused by variants affecting the gene represented in this entry.</text>
</comment>
<comment type="disease" evidence="6 17">
    <disease id="DI-01853">
        <name>Periodontititis, aggressive, 1</name>
        <acronym>AP1</acronym>
        <description>A disease characterized by severe and protracted gingival infections, generalized or localized, leading to tooth loss. Amounts of microbial deposits are generally inconsistent with the severity of periodontal tissue destruction and the progression of attachment and bone loss may be self arresting.</description>
        <dbReference type="MIM" id="170650"/>
    </disease>
    <text>The disease is caused by variants affecting the gene represented in this entry.</text>
</comment>
<comment type="similarity">
    <text evidence="1 2 3">Belongs to the peptidase C1 family.</text>
</comment>
<comment type="sequence caution" evidence="34">
    <conflict type="erroneous initiation">
        <sequence resource="EMBL-CDS" id="CAD97897"/>
    </conflict>
    <text>Extended N-terminus.</text>
</comment>
<comment type="online information" name="CTSCbase">
    <link uri="https://databases.lovd.nl/shared/genes/CTSC"/>
    <text>CTSC mutation db</text>
</comment>
<organism>
    <name type="scientific">Homo sapiens</name>
    <name type="common">Human</name>
    <dbReference type="NCBI Taxonomy" id="9606"/>
    <lineage>
        <taxon>Eukaryota</taxon>
        <taxon>Metazoa</taxon>
        <taxon>Chordata</taxon>
        <taxon>Craniata</taxon>
        <taxon>Vertebrata</taxon>
        <taxon>Euteleostomi</taxon>
        <taxon>Mammalia</taxon>
        <taxon>Eutheria</taxon>
        <taxon>Euarchontoglires</taxon>
        <taxon>Primates</taxon>
        <taxon>Haplorrhini</taxon>
        <taxon>Catarrhini</taxon>
        <taxon>Hominidae</taxon>
        <taxon>Homo</taxon>
    </lineage>
</organism>
<proteinExistence type="evidence at protein level"/>
<name>CATC_HUMAN</name>
<gene>
    <name type="primary">CTSC</name>
    <name type="synonym">CPPI</name>
</gene>
<accession>P53634</accession>
<accession>A8K7V2</accession>
<accession>B5MDD5</accession>
<accession>Q2HIY8</accession>
<accession>Q53G93</accession>
<accession>Q71E75</accession>
<accession>Q71E76</accession>
<accession>Q7M4N9</accession>
<accession>Q7Z3G7</accession>
<accession>Q7Z5U7</accession>
<accession>Q8WY99</accession>
<accession>Q8WYA7</accession>
<accession>Q8WYA8</accession>
<reference key="1">
    <citation type="journal article" date="1995" name="FEBS Lett.">
        <title>Molecular cloning and sequence analysis of human preprocathepsin C.</title>
        <authorList>
            <person name="Paris A."/>
            <person name="Strukelj B."/>
            <person name="Pungercar J."/>
            <person name="Renko M."/>
            <person name="Dolenc I."/>
            <person name="Turk V."/>
        </authorList>
    </citation>
    <scope>NUCLEOTIDE SEQUENCE [MRNA] (ISOFORM 1)</scope>
    <scope>VARIANT THR-153</scope>
    <source>
        <tissue>Ileum</tissue>
    </source>
</reference>
<reference key="2">
    <citation type="journal article" date="1997" name="J. Biol. Chem.">
        <title>Human dipeptidyl-peptidase I. Gene characterization, localization, and expression.</title>
        <authorList>
            <person name="Rao N.V."/>
            <person name="Rao G.V."/>
            <person name="Hoidal J.R."/>
        </authorList>
    </citation>
    <scope>NUCLEOTIDE SEQUENCE [GENOMIC DNA]</scope>
    <scope>INDUCTION</scope>
    <scope>TISSUE SPECIFICITY</scope>
    <scope>VARIANT THR-153</scope>
</reference>
<reference key="3">
    <citation type="journal article" date="2001" name="Hum. Mutat.">
        <title>Cathepsin C gene: first compound heterozygous patient with Papillon-Lefevre syndrome and a novel symptomless mutation.</title>
        <authorList>
            <person name="Allende L.M."/>
            <person name="Garcia-Perez M.A."/>
            <person name="Moreno A."/>
            <person name="Corell A."/>
            <person name="Carasol M."/>
            <person name="Martinez-Canut P."/>
            <person name="Arnaiz-Villena A."/>
        </authorList>
    </citation>
    <scope>NUCLEOTIDE SEQUENCE [MRNA] (ISOFORM 1)</scope>
    <scope>VARIANTS PLS TYR-236; ARG-286 AND TYR-291</scope>
    <scope>VARIANT THR-153</scope>
    <source>
        <tissue>Blood</tissue>
    </source>
</reference>
<reference key="4">
    <citation type="journal article" date="2003" name="Mol. Genet. Metab.">
        <title>A genetic study of cathepsin C gene in two families with Papillon-Lefevre syndrome.</title>
        <authorList>
            <person name="Allende L.M."/>
            <person name="Moreno A."/>
            <person name="de Unamuno P."/>
        </authorList>
    </citation>
    <scope>NUCLEOTIDE SEQUENCE [MRNA] (ISOFORM 1)</scope>
    <scope>VARIANT THR-153</scope>
    <scope>VARIANT PLS HIS-294</scope>
    <source>
        <tissue>Blood</tissue>
    </source>
</reference>
<reference key="5">
    <citation type="journal article" date="2004" name="Nat. Genet.">
        <title>Complete sequencing and characterization of 21,243 full-length human cDNAs.</title>
        <authorList>
            <person name="Ota T."/>
            <person name="Suzuki Y."/>
            <person name="Nishikawa T."/>
            <person name="Otsuki T."/>
            <person name="Sugiyama T."/>
            <person name="Irie R."/>
            <person name="Wakamatsu A."/>
            <person name="Hayashi K."/>
            <person name="Sato H."/>
            <person name="Nagai K."/>
            <person name="Kimura K."/>
            <person name="Makita H."/>
            <person name="Sekine M."/>
            <person name="Obayashi M."/>
            <person name="Nishi T."/>
            <person name="Shibahara T."/>
            <person name="Tanaka T."/>
            <person name="Ishii S."/>
            <person name="Yamamoto J."/>
            <person name="Saito K."/>
            <person name="Kawai Y."/>
            <person name="Isono Y."/>
            <person name="Nakamura Y."/>
            <person name="Nagahari K."/>
            <person name="Murakami K."/>
            <person name="Yasuda T."/>
            <person name="Iwayanagi T."/>
            <person name="Wagatsuma M."/>
            <person name="Shiratori A."/>
            <person name="Sudo H."/>
            <person name="Hosoiri T."/>
            <person name="Kaku Y."/>
            <person name="Kodaira H."/>
            <person name="Kondo H."/>
            <person name="Sugawara M."/>
            <person name="Takahashi M."/>
            <person name="Kanda K."/>
            <person name="Yokoi T."/>
            <person name="Furuya T."/>
            <person name="Kikkawa E."/>
            <person name="Omura Y."/>
            <person name="Abe K."/>
            <person name="Kamihara K."/>
            <person name="Katsuta N."/>
            <person name="Sato K."/>
            <person name="Tanikawa M."/>
            <person name="Yamazaki M."/>
            <person name="Ninomiya K."/>
            <person name="Ishibashi T."/>
            <person name="Yamashita H."/>
            <person name="Murakawa K."/>
            <person name="Fujimori K."/>
            <person name="Tanai H."/>
            <person name="Kimata M."/>
            <person name="Watanabe M."/>
            <person name="Hiraoka S."/>
            <person name="Chiba Y."/>
            <person name="Ishida S."/>
            <person name="Ono Y."/>
            <person name="Takiguchi S."/>
            <person name="Watanabe S."/>
            <person name="Yosida M."/>
            <person name="Hotuta T."/>
            <person name="Kusano J."/>
            <person name="Kanehori K."/>
            <person name="Takahashi-Fujii A."/>
            <person name="Hara H."/>
            <person name="Tanase T.-O."/>
            <person name="Nomura Y."/>
            <person name="Togiya S."/>
            <person name="Komai F."/>
            <person name="Hara R."/>
            <person name="Takeuchi K."/>
            <person name="Arita M."/>
            <person name="Imose N."/>
            <person name="Musashino K."/>
            <person name="Yuuki H."/>
            <person name="Oshima A."/>
            <person name="Sasaki N."/>
            <person name="Aotsuka S."/>
            <person name="Yoshikawa Y."/>
            <person name="Matsunawa H."/>
            <person name="Ichihara T."/>
            <person name="Shiohata N."/>
            <person name="Sano S."/>
            <person name="Moriya S."/>
            <person name="Momiyama H."/>
            <person name="Satoh N."/>
            <person name="Takami S."/>
            <person name="Terashima Y."/>
            <person name="Suzuki O."/>
            <person name="Nakagawa S."/>
            <person name="Senoh A."/>
            <person name="Mizoguchi H."/>
            <person name="Goto Y."/>
            <person name="Shimizu F."/>
            <person name="Wakebe H."/>
            <person name="Hishigaki H."/>
            <person name="Watanabe T."/>
            <person name="Sugiyama A."/>
            <person name="Takemoto M."/>
            <person name="Kawakami B."/>
            <person name="Yamazaki M."/>
            <person name="Watanabe K."/>
            <person name="Kumagai A."/>
            <person name="Itakura S."/>
            <person name="Fukuzumi Y."/>
            <person name="Fujimori Y."/>
            <person name="Komiyama M."/>
            <person name="Tashiro H."/>
            <person name="Tanigami A."/>
            <person name="Fujiwara T."/>
            <person name="Ono T."/>
            <person name="Yamada K."/>
            <person name="Fujii Y."/>
            <person name="Ozaki K."/>
            <person name="Hirao M."/>
            <person name="Ohmori Y."/>
            <person name="Kawabata A."/>
            <person name="Hikiji T."/>
            <person name="Kobatake N."/>
            <person name="Inagaki H."/>
            <person name="Ikema Y."/>
            <person name="Okamoto S."/>
            <person name="Okitani R."/>
            <person name="Kawakami T."/>
            <person name="Noguchi S."/>
            <person name="Itoh T."/>
            <person name="Shigeta K."/>
            <person name="Senba T."/>
            <person name="Matsumura K."/>
            <person name="Nakajima Y."/>
            <person name="Mizuno T."/>
            <person name="Morinaga M."/>
            <person name="Sasaki M."/>
            <person name="Togashi T."/>
            <person name="Oyama M."/>
            <person name="Hata H."/>
            <person name="Watanabe M."/>
            <person name="Komatsu T."/>
            <person name="Mizushima-Sugano J."/>
            <person name="Satoh T."/>
            <person name="Shirai Y."/>
            <person name="Takahashi Y."/>
            <person name="Nakagawa K."/>
            <person name="Okumura K."/>
            <person name="Nagase T."/>
            <person name="Nomura N."/>
            <person name="Kikuchi H."/>
            <person name="Masuho Y."/>
            <person name="Yamashita R."/>
            <person name="Nakai K."/>
            <person name="Yada T."/>
            <person name="Nakamura Y."/>
            <person name="Ohara O."/>
            <person name="Isogai T."/>
            <person name="Sugano S."/>
        </authorList>
    </citation>
    <scope>NUCLEOTIDE SEQUENCE [LARGE SCALE MRNA] (ISOFORMS 1 AND 2)</scope>
    <scope>VARIANT THR-153</scope>
    <source>
        <tissue>Cerebellum</tissue>
        <tissue>Rheumatoid arthritic synovial fluid</tissue>
    </source>
</reference>
<reference key="6">
    <citation type="submission" date="2005-04" db="EMBL/GenBank/DDBJ databases">
        <authorList>
            <person name="Suzuki Y."/>
            <person name="Sugano S."/>
            <person name="Totoki Y."/>
            <person name="Toyoda A."/>
            <person name="Takeda T."/>
            <person name="Sakaki Y."/>
            <person name="Tanaka A."/>
            <person name="Yokoyama S."/>
        </authorList>
    </citation>
    <scope>NUCLEOTIDE SEQUENCE [LARGE SCALE MRNA] (ISOFORM 1)</scope>
    <scope>VARIANT THR-153</scope>
    <source>
        <tissue>Thyroid</tissue>
    </source>
</reference>
<reference key="7">
    <citation type="journal article" date="2007" name="BMC Genomics">
        <title>The full-ORF clone resource of the German cDNA consortium.</title>
        <authorList>
            <person name="Bechtel S."/>
            <person name="Rosenfelder H."/>
            <person name="Duda A."/>
            <person name="Schmidt C.P."/>
            <person name="Ernst U."/>
            <person name="Wellenreuther R."/>
            <person name="Mehrle A."/>
            <person name="Schuster C."/>
            <person name="Bahr A."/>
            <person name="Bloecker H."/>
            <person name="Heubner D."/>
            <person name="Hoerlein A."/>
            <person name="Michel G."/>
            <person name="Wedler H."/>
            <person name="Koehrer K."/>
            <person name="Ottenwaelder B."/>
            <person name="Poustka A."/>
            <person name="Wiemann S."/>
            <person name="Schupp I."/>
        </authorList>
    </citation>
    <scope>NUCLEOTIDE SEQUENCE [LARGE SCALE MRNA] (ISOFORM 2)</scope>
    <source>
        <tissue>Fetal kidney</tissue>
    </source>
</reference>
<reference key="8">
    <citation type="journal article" date="2006" name="Nature">
        <title>Human chromosome 11 DNA sequence and analysis including novel gene identification.</title>
        <authorList>
            <person name="Taylor T.D."/>
            <person name="Noguchi H."/>
            <person name="Totoki Y."/>
            <person name="Toyoda A."/>
            <person name="Kuroki Y."/>
            <person name="Dewar K."/>
            <person name="Lloyd C."/>
            <person name="Itoh T."/>
            <person name="Takeda T."/>
            <person name="Kim D.-W."/>
            <person name="She X."/>
            <person name="Barlow K.F."/>
            <person name="Bloom T."/>
            <person name="Bruford E."/>
            <person name="Chang J.L."/>
            <person name="Cuomo C.A."/>
            <person name="Eichler E."/>
            <person name="FitzGerald M.G."/>
            <person name="Jaffe D.B."/>
            <person name="LaButti K."/>
            <person name="Nicol R."/>
            <person name="Park H.-S."/>
            <person name="Seaman C."/>
            <person name="Sougnez C."/>
            <person name="Yang X."/>
            <person name="Zimmer A.R."/>
            <person name="Zody M.C."/>
            <person name="Birren B.W."/>
            <person name="Nusbaum C."/>
            <person name="Fujiyama A."/>
            <person name="Hattori M."/>
            <person name="Rogers J."/>
            <person name="Lander E.S."/>
            <person name="Sakaki Y."/>
        </authorList>
    </citation>
    <scope>NUCLEOTIDE SEQUENCE [LARGE SCALE GENOMIC DNA]</scope>
</reference>
<reference key="9">
    <citation type="submission" date="2005-07" db="EMBL/GenBank/DDBJ databases">
        <authorList>
            <person name="Mural R.J."/>
            <person name="Istrail S."/>
            <person name="Sutton G.G."/>
            <person name="Florea L."/>
            <person name="Halpern A.L."/>
            <person name="Mobarry C.M."/>
            <person name="Lippert R."/>
            <person name="Walenz B."/>
            <person name="Shatkay H."/>
            <person name="Dew I."/>
            <person name="Miller J.R."/>
            <person name="Flanigan M.J."/>
            <person name="Edwards N.J."/>
            <person name="Bolanos R."/>
            <person name="Fasulo D."/>
            <person name="Halldorsson B.V."/>
            <person name="Hannenhalli S."/>
            <person name="Turner R."/>
            <person name="Yooseph S."/>
            <person name="Lu F."/>
            <person name="Nusskern D.R."/>
            <person name="Shue B.C."/>
            <person name="Zheng X.H."/>
            <person name="Zhong F."/>
            <person name="Delcher A.L."/>
            <person name="Huson D.H."/>
            <person name="Kravitz S.A."/>
            <person name="Mouchard L."/>
            <person name="Reinert K."/>
            <person name="Remington K.A."/>
            <person name="Clark A.G."/>
            <person name="Waterman M.S."/>
            <person name="Eichler E.E."/>
            <person name="Adams M.D."/>
            <person name="Hunkapiller M.W."/>
            <person name="Myers E.W."/>
            <person name="Venter J.C."/>
        </authorList>
    </citation>
    <scope>NUCLEOTIDE SEQUENCE [LARGE SCALE GENOMIC DNA]</scope>
    <scope>VARIANT THR-153</scope>
</reference>
<reference key="10">
    <citation type="journal article" date="2004" name="Genome Res.">
        <title>The status, quality, and expansion of the NIH full-length cDNA project: the Mammalian Gene Collection (MGC).</title>
        <authorList>
            <consortium name="The MGC Project Team"/>
        </authorList>
    </citation>
    <scope>NUCLEOTIDE SEQUENCE [LARGE SCALE MRNA] (ISOFORMS 2 AND 3)</scope>
    <source>
        <tissue>Pancreas</tissue>
    </source>
</reference>
<reference key="11">
    <citation type="journal article" date="1998" name="Biochim. Biophys. Acta">
        <title>Stoichiometry and heterogeneity of the pro-region chain in tetrameric human cathepsin C.</title>
        <authorList>
            <person name="Cigic B."/>
            <person name="Krizaj I."/>
            <person name="Kralj B."/>
            <person name="Turk V."/>
            <person name="Pain R.H."/>
        </authorList>
    </citation>
    <scope>PROTEIN SEQUENCE OF 25-71; 122-143; 231-235 AND 395-399</scope>
    <scope>CHARACTERIZATION OF EXCLUSION DOMAIN</scope>
    <scope>GLYCOSYLATION</scope>
</reference>
<reference key="12">
    <citation type="journal article" date="1995" name="J. Biol. Chem.">
        <title>Oligomeric structure and substrate induced inhibition of human cathepsin C.</title>
        <authorList>
            <person name="Dolenc I."/>
            <person name="Turk B."/>
            <person name="Pungercic G."/>
            <person name="Ritonja A."/>
            <person name="Turk V."/>
        </authorList>
    </citation>
    <scope>PROTEIN SEQUENCE OF 25-34; 231-239 AND 395-404</scope>
    <scope>SUBCELLULAR LOCATION</scope>
</reference>
<reference key="13">
    <citation type="journal article" date="2000" name="Biochemistry">
        <title>The residual pro-part of cathepsin C fulfills the criteria required for an intramolecular chaperone in folding and stabilizing the human proenzyme.</title>
        <authorList>
            <person name="Cigic B."/>
            <person name="Dahl S.W."/>
            <person name="Pain R.H."/>
        </authorList>
    </citation>
    <scope>PROTEIN SEQUENCE OF 25-28; 51-61; 114-117 AND 133-139</scope>
    <scope>CHARACTERIZATION OF EXCLUSION DOMAIN</scope>
    <scope>DISULFIDE BONDS</scope>
</reference>
<reference key="14">
    <citation type="journal article" date="1992" name="Arch. Biochem. Biophys.">
        <title>Purification and characterization of dipeptidyl peptidase I from human spleen.</title>
        <authorList>
            <person name="McGuire M.J."/>
            <person name="Lipsky P.E."/>
            <person name="Thiele D.L."/>
        </authorList>
    </citation>
    <scope>PROTEIN SEQUENCE OF 231-290; 310-328 AND 340-383</scope>
    <scope>FUNCTION</scope>
    <scope>CATALYTIC ACTIVITY</scope>
    <scope>ACTIVITY REGULATION</scope>
    <scope>BIOPHYSICOCHEMICAL PROPERTIES</scope>
    <scope>SUBUNIT</scope>
    <scope>GLYCOSYLATION</scope>
    <scope>VARIANT THR-153</scope>
    <source>
        <tissue>Spleen</tissue>
    </source>
</reference>
<reference key="15">
    <citation type="journal article" date="1993" name="J. Biol. Chem.">
        <title>Generation of active myeloid and lymphoid granule serine proteases requires processing by the granule thiol protease dipeptidyl peptidase I.</title>
        <authorList>
            <person name="McGuire M.J."/>
            <person name="Lipsky P.E."/>
            <person name="Thiele D.L."/>
        </authorList>
    </citation>
    <scope>FUNCTION</scope>
</reference>
<reference key="16">
    <citation type="journal article" date="2009" name="Cell">
        <title>Cotranslational and posttranslational N-glycosylation of polypeptides by distinct mammalian OST isoforms.</title>
        <authorList>
            <person name="Ruiz-Canada C."/>
            <person name="Kelleher D.J."/>
            <person name="Gilmore R."/>
        </authorList>
    </citation>
    <scope>GLYCOSYLATION AT ASN-29; ASN-53; ASN-119 AND ASN-276</scope>
</reference>
<reference key="17">
    <citation type="journal article" date="2009" name="J. Proteome Res.">
        <title>Glycoproteomics analysis of human liver tissue by combination of multiple enzyme digestion and hydrazide chemistry.</title>
        <authorList>
            <person name="Chen R."/>
            <person name="Jiang X."/>
            <person name="Sun D."/>
            <person name="Han G."/>
            <person name="Wang F."/>
            <person name="Ye M."/>
            <person name="Wang L."/>
            <person name="Zou H."/>
        </authorList>
    </citation>
    <scope>GLYCOSYLATION [LARGE SCALE ANALYSIS] AT ASN-53</scope>
    <source>
        <tissue>Liver</tissue>
    </source>
</reference>
<reference key="18">
    <citation type="journal article" date="2011" name="BMC Syst. Biol.">
        <title>Initial characterization of the human central proteome.</title>
        <authorList>
            <person name="Burkard T.R."/>
            <person name="Planyavsky M."/>
            <person name="Kaupe I."/>
            <person name="Breitwieser F.P."/>
            <person name="Buerckstuemmer T."/>
            <person name="Bennett K.L."/>
            <person name="Superti-Furga G."/>
            <person name="Colinge J."/>
        </authorList>
    </citation>
    <scope>IDENTIFICATION BY MASS SPECTROMETRY [LARGE SCALE ANALYSIS]</scope>
</reference>
<reference key="19">
    <citation type="journal article" date="2014" name="J. Proteomics">
        <title>An enzyme assisted RP-RPLC approach for in-depth analysis of human liver phosphoproteome.</title>
        <authorList>
            <person name="Bian Y."/>
            <person name="Song C."/>
            <person name="Cheng K."/>
            <person name="Dong M."/>
            <person name="Wang F."/>
            <person name="Huang J."/>
            <person name="Sun D."/>
            <person name="Wang L."/>
            <person name="Ye M."/>
            <person name="Zou H."/>
        </authorList>
    </citation>
    <scope>IDENTIFICATION BY MASS SPECTROMETRY [LARGE SCALE ANALYSIS]</scope>
    <source>
        <tissue>Liver</tissue>
    </source>
</reference>
<reference key="20">
    <citation type="journal article" date="2015" name="Proteomics">
        <title>N-terminome analysis of the human mitochondrial proteome.</title>
        <authorList>
            <person name="Vaca Jacome A.S."/>
            <person name="Rabilloud T."/>
            <person name="Schaeffer-Reiss C."/>
            <person name="Rompais M."/>
            <person name="Ayoub D."/>
            <person name="Lane L."/>
            <person name="Bairoch A."/>
            <person name="Van Dorsselaer A."/>
            <person name="Carapito C."/>
        </authorList>
    </citation>
    <scope>IDENTIFICATION BY MASS SPECTROMETRY [LARGE SCALE ANALYSIS]</scope>
</reference>
<reference evidence="36" key="21">
    <citation type="journal article" date="2001" name="EMBO J.">
        <title>Structure of human dipeptidyl peptidase I (cathepsin C): exclusion domain added to an endopeptidase framework creates the machine for activation of granular serine proteases.</title>
        <authorList>
            <person name="Turk D."/>
            <person name="Janjic V."/>
            <person name="Stern I."/>
            <person name="Podobnik M."/>
            <person name="Lamba D."/>
            <person name="Dahl S.W."/>
            <person name="Lauritzen C."/>
            <person name="Pedersen J."/>
            <person name="Turk V."/>
            <person name="Turk B."/>
        </authorList>
    </citation>
    <scope>X-RAY CRYSTALLOGRAPHY (2.15 ANGSTROMS) OF 25-143 AND 231-463 IN COMPLEX WITH CHLORIDE IONS</scope>
    <scope>SUBUNIT</scope>
    <scope>DISULFIDE BONDS</scope>
    <scope>GLYCOSYLATION AT ASN-29</scope>
</reference>
<reference key="22">
    <citation type="journal article" date="1999" name="Nat. Genet.">
        <title>Loss-of-function mutations in the cathepsin C gene result in periodontal disease and palmoplantar keratosis.</title>
        <authorList>
            <person name="Toomes C."/>
            <person name="James J."/>
            <person name="Wood A.J."/>
            <person name="Wu C.L."/>
            <person name="McCormick D."/>
            <person name="Lench N."/>
            <person name="Hewitt C."/>
            <person name="Moynihan L."/>
            <person name="Roberts E."/>
            <person name="Woods C.G."/>
            <person name="Markham A."/>
            <person name="Wong M."/>
            <person name="Widmer R."/>
            <person name="Ghaffar K.A."/>
            <person name="Pemberton M."/>
            <person name="Hussein I.R."/>
            <person name="Temtamy S.A."/>
            <person name="Davies R."/>
            <person name="Read A.P."/>
            <person name="Sloan P."/>
            <person name="Dixon M.J."/>
            <person name="Thakker N.S."/>
        </authorList>
    </citation>
    <scope>VARIANTS PLS PHE-249; LEU-252; PRO-272; SER-301; CYS-339 AND CYS-347</scope>
</reference>
<reference key="23">
    <citation type="journal article" date="2000" name="J. Med. Genet.">
        <title>Haim-Munk syndrome and Papillon-Lefevre syndrome are allelic mutations in cathepsin C.</title>
        <authorList>
            <person name="Hart T.C."/>
            <person name="Hart P.S."/>
            <person name="Michalec M.D."/>
            <person name="Zhang Y."/>
            <person name="Firatli E."/>
            <person name="Van Dyke T.E."/>
            <person name="Stabholz A."/>
            <person name="Zlotogorski A."/>
            <person name="Shapira L."/>
            <person name="Soskolne W.A."/>
        </authorList>
    </citation>
    <scope>VARIANT HMS ARG-286</scope>
</reference>
<reference key="24">
    <citation type="journal article" date="2000" name="J. Med. Genet.">
        <title>Localisation of a gene for prepubertal periodontitis to chromosome 11q14 and identification of a cathepsin C gene mutation.</title>
        <authorList>
            <person name="Hart T.C."/>
            <person name="Hart P.S."/>
            <person name="Michalec M.D."/>
            <person name="Zhang Y."/>
            <person name="Marazita M.L."/>
            <person name="Cooper M."/>
            <person name="Yassin O.M."/>
            <person name="Nusier M."/>
            <person name="Walker S."/>
        </authorList>
    </citation>
    <scope>VARIANTS PLS CYS-339 AND CYS-340</scope>
    <scope>VARIANT AP1 CYS-347</scope>
</reference>
<reference key="25">
    <citation type="journal article" date="2000" name="J. Med. Genet.">
        <title>Identification of cathepsin C mutations in ethnically diverse Papillon-Lefevre syndrome patients.</title>
        <authorList>
            <person name="Hart P.S."/>
            <person name="Zhang Y."/>
            <person name="Firatli E."/>
            <person name="Uygur C."/>
            <person name="Lotfazar M."/>
            <person name="Michalec M.D."/>
            <person name="Marks J.J."/>
            <person name="Lu X."/>
            <person name="Coates B.J."/>
            <person name="Seow W.K."/>
            <person name="Marshall R."/>
            <person name="Williams D."/>
            <person name="Reed J.B."/>
            <person name="Wright J.T."/>
            <person name="Hart T.C."/>
        </authorList>
    </citation>
    <scope>VARIANTS PLS 67-TYR--ALA-74 DEL; PRO-272; SER-300; VAL-301; SER-301; ASN-304; GLY-319; CYS-339; CYS-340 AND GLY-447</scope>
    <scope>VARIANT THR-153</scope>
</reference>
<reference key="26">
    <citation type="journal article" date="2001" name="J. Invest. Dermatol.">
        <title>Papillon-Lefevre syndrome: mutations and polymorphisms in the cathepsin C gene.</title>
        <authorList>
            <person name="Nakano A."/>
            <person name="Nomura K."/>
            <person name="Nakano H."/>
            <person name="Ono Y."/>
            <person name="LaForgia S."/>
            <person name="Pulkkinen L."/>
            <person name="Hashimoto I."/>
            <person name="Uitto J."/>
        </authorList>
    </citation>
    <scope>VARIANTS PLS SER-39 AND SER-301</scope>
    <scope>VARIANT VAL-453</scope>
</reference>
<reference key="27">
    <citation type="journal article" date="2001" name="J. Invest. Dermatol.">
        <title>Novel point mutations, deletions, and polymorphisms in the cathepsin C gene in nine families from Europe and North Africa with Papillon-Lefevre syndrome.</title>
        <authorList>
            <person name="Lefevre C."/>
            <person name="Blanchet-Bardon C."/>
            <person name="Jobard F."/>
            <person name="Bouadjar B."/>
            <person name="Stalder J.-F."/>
            <person name="Cure S."/>
            <person name="Hoffmann A."/>
            <person name="Prud'Homme J.-F."/>
            <person name="Fischer J."/>
        </authorList>
    </citation>
    <scope>VARIANTS PLS PRO-127; PRO-272; CYS-339 AND CYS-429</scope>
    <scope>VARIANTS THR-153 AND LYS-401</scope>
</reference>
<reference key="28">
    <citation type="journal article" date="2001" name="J. Med. Genet.">
        <title>Evidence of a founder effect for four cathepsin C gene mutations in Papillon-Lefevre syndrome patients.</title>
        <authorList>
            <person name="Zhang Y."/>
            <person name="Lundgren T."/>
            <person name="Renvert S."/>
            <person name="Tatakis D.N."/>
            <person name="Firatli E."/>
            <person name="Uygur C."/>
            <person name="Hart P.S."/>
            <person name="Gorry M.C."/>
            <person name="Marks J.J."/>
            <person name="Hart T.C."/>
        </authorList>
    </citation>
    <scope>VARIANTS PLS PRO-272 AND ASP-300</scope>
</reference>
<reference key="29">
    <citation type="journal article" date="2002" name="Hum. Mutat.">
        <title>Biochemical and mutational analyses of the cathepsin c gene (CTSC) in three North American families with Papillon Lefevre syndrome.</title>
        <authorList>
            <person name="Zhang Y."/>
            <person name="Hart P.S."/>
            <person name="Moretti A.J."/>
            <person name="Bouwsma O.J."/>
            <person name="Fisher E.M."/>
            <person name="Dudlicek L."/>
            <person name="Pettenati M.J."/>
            <person name="Hart T.C."/>
        </authorList>
    </citation>
    <scope>VARIANTS PLS ARG-139 AND PRO-272</scope>
    <scope>VARIANT THR-153</scope>
</reference>
<reference key="30">
    <citation type="journal article" date="2004" name="Hum. Mutat.">
        <title>The role of cathepsin C in Papillon-Lefevre syndrome, prepubertal periodontitis, and aggressive periodontitis.</title>
        <authorList>
            <person name="Hewitt C."/>
            <person name="McCormick D."/>
            <person name="Linden G."/>
            <person name="Turk D."/>
            <person name="Stern I."/>
            <person name="Wallace I."/>
            <person name="Southern L."/>
            <person name="Zhang L."/>
            <person name="Howard R."/>
            <person name="Bullon P."/>
            <person name="Wong M."/>
            <person name="Widmer R."/>
            <person name="Gaffar K.A."/>
            <person name="Awawdeh L."/>
            <person name="Briggs J."/>
            <person name="Yaghmai R."/>
            <person name="Jabs E.W."/>
            <person name="Hoeger P."/>
            <person name="Bleck O."/>
            <person name="Rudiger S.G."/>
            <person name="Petersilka G."/>
            <person name="Battino M."/>
            <person name="Brett P."/>
            <person name="Hattab F."/>
            <person name="Al-Hamed M."/>
            <person name="Sloan P."/>
            <person name="Toomes C."/>
            <person name="Dixon M.J."/>
            <person name="James J."/>
            <person name="Read A.P."/>
            <person name="Thakker N.S."/>
        </authorList>
    </citation>
    <scope>VARIANTS PLS GLU-129; ARG-139; TYR-236; PHE-249; LEU-252; HIS-272; SER-301; ARG-312; CYS-339; CYS-347 AND GLY-447</scope>
    <scope>VARIANTS AP1 HIS-272 AND CYS-412</scope>
    <scope>VARIANT THR-153</scope>
</reference>
<reference key="31">
    <citation type="journal article" date="2004" name="Hum. Mutat.">
        <title>Loss-of-function mutations in cathepsin C in two families with Papillon-Lefevre syndrome are associated with deficiency of serine proteinases in PMNs.</title>
        <authorList>
            <person name="de Haar S.F."/>
            <person name="Jansen D.C."/>
            <person name="Schoenmaker T."/>
            <person name="De Vree H."/>
            <person name="Everts V."/>
            <person name="Beertsen W."/>
        </authorList>
    </citation>
    <scope>VARIANT PLS ASN-405</scope>
</reference>
<reference key="32">
    <citation type="journal article" date="2005" name="Hum. Genet.">
        <title>Gene symbol: CTSC. Disease: Papillon-Lefevre syndrome.</title>
        <authorList>
            <person name="de Haar S.F."/>
            <person name="Mir M."/>
            <person name="Nguyen M."/>
            <person name="Kazemi B."/>
            <person name="Ramezani G.H."/>
            <person name="Everts V."/>
        </authorList>
    </citation>
    <scope>VARIANT PLS ARG-405</scope>
</reference>
<reference key="33">
    <citation type="journal article" date="2005" name="Hum. Genet.">
        <authorList>
            <person name="de Haar S.F."/>
            <person name="Mir M."/>
            <person name="Nguyen M."/>
            <person name="Kazemi B."/>
            <person name="Ramezani G.H."/>
            <person name="Everts V."/>
        </authorList>
    </citation>
    <scope>ERRATUM OF PUBMED:15991336</scope>
</reference>
<reference key="34">
    <citation type="journal article" date="2015" name="PLoS ONE">
        <title>Proxy molecular diagnosis from whole-exome sequencing reveals Papillon-Lefevre syndrome caused by a missense mutation in CTSC.</title>
        <authorList>
            <person name="Erzurumluoglu A.M."/>
            <person name="Alsaadi M.M."/>
            <person name="Rodriguez S."/>
            <person name="Alotaibi T.S."/>
            <person name="Guthrie P.A."/>
            <person name="Lewis S."/>
            <person name="Ginwalla A."/>
            <person name="Gaunt T.R."/>
            <person name="Alharbi K.K."/>
            <person name="Alsaif F.M."/>
            <person name="Alsaadi B.M."/>
            <person name="Day I.N."/>
        </authorList>
    </citation>
    <scope>VARIANT PLS ASP-300</scope>
</reference>
<dbReference type="EC" id="3.4.14.1" evidence="19"/>
<dbReference type="EMBL" id="X87212">
    <property type="protein sequence ID" value="CAA60671.1"/>
    <property type="molecule type" value="mRNA"/>
</dbReference>
<dbReference type="EMBL" id="U79415">
    <property type="protein sequence ID" value="AAC51341.1"/>
    <property type="molecule type" value="Genomic_DNA"/>
</dbReference>
<dbReference type="EMBL" id="AF234263">
    <property type="protein sequence ID" value="AAL48191.1"/>
    <property type="molecule type" value="mRNA"/>
</dbReference>
<dbReference type="EMBL" id="AF234264">
    <property type="protein sequence ID" value="AAL48192.1"/>
    <property type="molecule type" value="mRNA"/>
</dbReference>
<dbReference type="EMBL" id="AF254757">
    <property type="protein sequence ID" value="AAL48195.1"/>
    <property type="molecule type" value="mRNA"/>
</dbReference>
<dbReference type="EMBL" id="AF525032">
    <property type="protein sequence ID" value="AAQ08887.1"/>
    <property type="molecule type" value="mRNA"/>
</dbReference>
<dbReference type="EMBL" id="AF525033">
    <property type="protein sequence ID" value="AAQ08888.1"/>
    <property type="molecule type" value="mRNA"/>
</dbReference>
<dbReference type="EMBL" id="AK292117">
    <property type="protein sequence ID" value="BAF84806.1"/>
    <property type="molecule type" value="mRNA"/>
</dbReference>
<dbReference type="EMBL" id="AK311923">
    <property type="protein sequence ID" value="BAG34864.1"/>
    <property type="molecule type" value="mRNA"/>
</dbReference>
<dbReference type="EMBL" id="AK223038">
    <property type="protein sequence ID" value="BAD96758.1"/>
    <property type="molecule type" value="mRNA"/>
</dbReference>
<dbReference type="EMBL" id="BX537913">
    <property type="protein sequence ID" value="CAD97897.1"/>
    <property type="status" value="ALT_INIT"/>
    <property type="molecule type" value="mRNA"/>
</dbReference>
<dbReference type="EMBL" id="AC011088">
    <property type="status" value="NOT_ANNOTATED_CDS"/>
    <property type="molecule type" value="Genomic_DNA"/>
</dbReference>
<dbReference type="EMBL" id="CH471185">
    <property type="protein sequence ID" value="EAW59364.1"/>
    <property type="molecule type" value="Genomic_DNA"/>
</dbReference>
<dbReference type="EMBL" id="BC054028">
    <property type="protein sequence ID" value="AAH54028.1"/>
    <property type="molecule type" value="mRNA"/>
</dbReference>
<dbReference type="EMBL" id="BC100891">
    <property type="protein sequence ID" value="AAI00892.1"/>
    <property type="molecule type" value="mRNA"/>
</dbReference>
<dbReference type="EMBL" id="BC100892">
    <property type="protein sequence ID" value="AAI00893.1"/>
    <property type="molecule type" value="mRNA"/>
</dbReference>
<dbReference type="EMBL" id="BC100893">
    <property type="protein sequence ID" value="AAI00894.1"/>
    <property type="molecule type" value="mRNA"/>
</dbReference>
<dbReference type="EMBL" id="BC100894">
    <property type="protein sequence ID" value="AAI00895.1"/>
    <property type="molecule type" value="mRNA"/>
</dbReference>
<dbReference type="EMBL" id="BC109386">
    <property type="protein sequence ID" value="AAI09387.1"/>
    <property type="molecule type" value="mRNA"/>
</dbReference>
<dbReference type="EMBL" id="BC110071">
    <property type="protein sequence ID" value="AAI10072.1"/>
    <property type="molecule type" value="mRNA"/>
</dbReference>
<dbReference type="EMBL" id="BC113850">
    <property type="protein sequence ID" value="AAI13851.1"/>
    <property type="molecule type" value="mRNA"/>
</dbReference>
<dbReference type="EMBL" id="BC113897">
    <property type="protein sequence ID" value="AAI13898.1"/>
    <property type="molecule type" value="mRNA"/>
</dbReference>
<dbReference type="CCDS" id="CCDS31654.1">
    <molecule id="P53634-2"/>
</dbReference>
<dbReference type="CCDS" id="CCDS44693.1">
    <molecule id="P53634-3"/>
</dbReference>
<dbReference type="CCDS" id="CCDS8282.1">
    <molecule id="P53634-1"/>
</dbReference>
<dbReference type="PIR" id="S23941">
    <property type="entry name" value="S23941"/>
</dbReference>
<dbReference type="PIR" id="S66504">
    <property type="entry name" value="S66504"/>
</dbReference>
<dbReference type="RefSeq" id="NP_001107645.1">
    <molecule id="P53634-3"/>
    <property type="nucleotide sequence ID" value="NM_001114173.3"/>
</dbReference>
<dbReference type="RefSeq" id="NP_001805.4">
    <molecule id="P53634-1"/>
    <property type="nucleotide sequence ID" value="NM_001814.6"/>
</dbReference>
<dbReference type="RefSeq" id="NP_680475.1">
    <molecule id="P53634-2"/>
    <property type="nucleotide sequence ID" value="NM_148170.5"/>
</dbReference>
<dbReference type="PDB" id="1K3B">
    <property type="method" value="X-ray"/>
    <property type="resolution" value="2.15 A"/>
    <property type="chains" value="A=25-143, B=231-394, C=395-463"/>
</dbReference>
<dbReference type="PDB" id="2DJF">
    <property type="method" value="X-ray"/>
    <property type="resolution" value="2.00 A"/>
    <property type="chains" value="A=25-143, B=231-394, C=395-463"/>
</dbReference>
<dbReference type="PDB" id="2DJG">
    <property type="method" value="X-ray"/>
    <property type="resolution" value="2.05 A"/>
    <property type="chains" value="A=25-143, B=231-394, C=395-463"/>
</dbReference>
<dbReference type="PDB" id="3PDF">
    <property type="method" value="X-ray"/>
    <property type="resolution" value="1.85 A"/>
    <property type="chains" value="A=25-463"/>
</dbReference>
<dbReference type="PDB" id="4CDC">
    <property type="method" value="X-ray"/>
    <property type="resolution" value="2.40 A"/>
    <property type="chains" value="A/D/G/J=25-143, B/E/H/K=230-394, C/F/I/L=395-463"/>
</dbReference>
<dbReference type="PDB" id="4CDD">
    <property type="method" value="X-ray"/>
    <property type="resolution" value="2.35 A"/>
    <property type="chains" value="A/D=25-144, B/E=230-394, C/F=395-463"/>
</dbReference>
<dbReference type="PDB" id="4CDE">
    <property type="method" value="X-ray"/>
    <property type="resolution" value="2.40 A"/>
    <property type="chains" value="A/D=25-143, B/E=230-394, C/F=395-463"/>
</dbReference>
<dbReference type="PDB" id="4CDF">
    <property type="method" value="X-ray"/>
    <property type="resolution" value="2.20 A"/>
    <property type="chains" value="A/D=25-144, B/E=229-394, C/F=395-463"/>
</dbReference>
<dbReference type="PDB" id="4OEL">
    <property type="method" value="X-ray"/>
    <property type="resolution" value="1.40 A"/>
    <property type="chains" value="A=25-394, B=395-463"/>
</dbReference>
<dbReference type="PDB" id="4OEM">
    <property type="method" value="X-ray"/>
    <property type="resolution" value="1.52 A"/>
    <property type="chains" value="A=25-394, B=395-463"/>
</dbReference>
<dbReference type="PDBsum" id="1K3B"/>
<dbReference type="PDBsum" id="2DJF"/>
<dbReference type="PDBsum" id="2DJG"/>
<dbReference type="PDBsum" id="3PDF"/>
<dbReference type="PDBsum" id="4CDC"/>
<dbReference type="PDBsum" id="4CDD"/>
<dbReference type="PDBsum" id="4CDE"/>
<dbReference type="PDBsum" id="4CDF"/>
<dbReference type="PDBsum" id="4OEL"/>
<dbReference type="PDBsum" id="4OEM"/>
<dbReference type="SMR" id="P53634"/>
<dbReference type="BioGRID" id="107502">
    <property type="interactions" value="62"/>
</dbReference>
<dbReference type="FunCoup" id="P53634">
    <property type="interactions" value="895"/>
</dbReference>
<dbReference type="IntAct" id="P53634">
    <property type="interactions" value="34"/>
</dbReference>
<dbReference type="MINT" id="P53634"/>
<dbReference type="STRING" id="9606.ENSP00000227266"/>
<dbReference type="BindingDB" id="P53634"/>
<dbReference type="ChEMBL" id="CHEMBL2252"/>
<dbReference type="DrugCentral" id="P53634"/>
<dbReference type="GuidetoPHARMACOLOGY" id="2344"/>
<dbReference type="MEROPS" id="C01.070"/>
<dbReference type="GlyConnect" id="1175">
    <property type="glycosylation" value="60 N-Linked glycans (4 sites)"/>
</dbReference>
<dbReference type="GlyCosmos" id="P53634">
    <property type="glycosylation" value="4 sites, 57 glycans"/>
</dbReference>
<dbReference type="GlyGen" id="P53634">
    <property type="glycosylation" value="6 sites, 132 N-linked glycans (4 sites), 1 O-linked glycan (1 site)"/>
</dbReference>
<dbReference type="iPTMnet" id="P53634"/>
<dbReference type="PhosphoSitePlus" id="P53634"/>
<dbReference type="SwissPalm" id="P53634"/>
<dbReference type="BioMuta" id="CTSC"/>
<dbReference type="DMDM" id="317373330"/>
<dbReference type="jPOST" id="P53634"/>
<dbReference type="MassIVE" id="P53634"/>
<dbReference type="PaxDb" id="9606-ENSP00000227266"/>
<dbReference type="PeptideAtlas" id="P53634"/>
<dbReference type="ProteomicsDB" id="56595">
    <molecule id="P53634-1"/>
</dbReference>
<dbReference type="ProteomicsDB" id="56596">
    <molecule id="P53634-2"/>
</dbReference>
<dbReference type="ProteomicsDB" id="56597">
    <molecule id="P53634-3"/>
</dbReference>
<dbReference type="Pumba" id="P53634"/>
<dbReference type="TopDownProteomics" id="P53634-1">
    <molecule id="P53634-1"/>
</dbReference>
<dbReference type="Antibodypedia" id="31473">
    <property type="antibodies" value="280 antibodies from 30 providers"/>
</dbReference>
<dbReference type="DNASU" id="1075"/>
<dbReference type="Ensembl" id="ENST00000227266.10">
    <molecule id="P53634-1"/>
    <property type="protein sequence ID" value="ENSP00000227266.4"/>
    <property type="gene ID" value="ENSG00000109861.17"/>
</dbReference>
<dbReference type="Ensembl" id="ENST00000524463.6">
    <molecule id="P53634-2"/>
    <property type="protein sequence ID" value="ENSP00000432541.1"/>
    <property type="gene ID" value="ENSG00000109861.17"/>
</dbReference>
<dbReference type="Ensembl" id="ENST00000529974.2">
    <molecule id="P53634-3"/>
    <property type="protein sequence ID" value="ENSP00000433539.1"/>
    <property type="gene ID" value="ENSG00000109861.17"/>
</dbReference>
<dbReference type="Ensembl" id="ENST00000677106.1">
    <molecule id="P53634-2"/>
    <property type="protein sequence ID" value="ENSP00000504568.1"/>
    <property type="gene ID" value="ENSG00000109861.17"/>
</dbReference>
<dbReference type="GeneID" id="1075"/>
<dbReference type="KEGG" id="hsa:1075"/>
<dbReference type="MANE-Select" id="ENST00000227266.10">
    <property type="protein sequence ID" value="ENSP00000227266.4"/>
    <property type="RefSeq nucleotide sequence ID" value="NM_001814.6"/>
    <property type="RefSeq protein sequence ID" value="NP_001805.4"/>
</dbReference>
<dbReference type="UCSC" id="uc001pck.5">
    <molecule id="P53634-1"/>
    <property type="organism name" value="human"/>
</dbReference>
<dbReference type="AGR" id="HGNC:2528"/>
<dbReference type="CTD" id="1075"/>
<dbReference type="DisGeNET" id="1075"/>
<dbReference type="GeneCards" id="CTSC"/>
<dbReference type="HGNC" id="HGNC:2528">
    <property type="gene designation" value="CTSC"/>
</dbReference>
<dbReference type="HPA" id="ENSG00000109861">
    <property type="expression patterns" value="Low tissue specificity"/>
</dbReference>
<dbReference type="MalaCards" id="CTSC"/>
<dbReference type="MIM" id="170650">
    <property type="type" value="phenotype"/>
</dbReference>
<dbReference type="MIM" id="245000">
    <property type="type" value="phenotype"/>
</dbReference>
<dbReference type="MIM" id="245010">
    <property type="type" value="phenotype"/>
</dbReference>
<dbReference type="MIM" id="602365">
    <property type="type" value="gene"/>
</dbReference>
<dbReference type="neXtProt" id="NX_P53634"/>
<dbReference type="OpenTargets" id="ENSG00000109861"/>
<dbReference type="Orphanet" id="2342">
    <property type="disease" value="Haim-Munk syndrome"/>
</dbReference>
<dbReference type="Orphanet" id="678">
    <property type="disease" value="Papillon-Lefevre syndrome"/>
</dbReference>
<dbReference type="PharmGKB" id="PA27028"/>
<dbReference type="VEuPathDB" id="HostDB:ENSG00000109861"/>
<dbReference type="eggNOG" id="KOG1543">
    <property type="taxonomic scope" value="Eukaryota"/>
</dbReference>
<dbReference type="GeneTree" id="ENSGT00940000155787"/>
<dbReference type="HOGENOM" id="CLU_048219_0_0_1"/>
<dbReference type="InParanoid" id="P53634"/>
<dbReference type="OMA" id="NAVQKSW"/>
<dbReference type="OrthoDB" id="3789175at2759"/>
<dbReference type="PAN-GO" id="P53634">
    <property type="GO annotations" value="4 GO annotations based on evolutionary models"/>
</dbReference>
<dbReference type="PhylomeDB" id="P53634"/>
<dbReference type="TreeFam" id="TF313225"/>
<dbReference type="BioCyc" id="MetaCyc:HS03265-MONOMER"/>
<dbReference type="BRENDA" id="3.4.14.1">
    <property type="organism ID" value="2681"/>
</dbReference>
<dbReference type="PathwayCommons" id="P53634"/>
<dbReference type="Reactome" id="R-HSA-204005">
    <property type="pathway name" value="COPII-mediated vesicle transport"/>
</dbReference>
<dbReference type="Reactome" id="R-HSA-2132295">
    <property type="pathway name" value="MHC class II antigen presentation"/>
</dbReference>
<dbReference type="Reactome" id="R-HSA-5694530">
    <property type="pathway name" value="Cargo concentration in the ER"/>
</dbReference>
<dbReference type="Reactome" id="R-HSA-6798695">
    <property type="pathway name" value="Neutrophil degranulation"/>
</dbReference>
<dbReference type="SABIO-RK" id="P53634"/>
<dbReference type="SignaLink" id="P53634"/>
<dbReference type="BioGRID-ORCS" id="1075">
    <property type="hits" value="13 hits in 1164 CRISPR screens"/>
</dbReference>
<dbReference type="ChiTaRS" id="CTSC">
    <property type="organism name" value="human"/>
</dbReference>
<dbReference type="EvolutionaryTrace" id="P53634"/>
<dbReference type="GeneWiki" id="Cathepsin_C"/>
<dbReference type="GenomeRNAi" id="1075"/>
<dbReference type="Pharos" id="P53634">
    <property type="development level" value="Tchem"/>
</dbReference>
<dbReference type="PRO" id="PR:P53634"/>
<dbReference type="Proteomes" id="UP000005640">
    <property type="component" value="Chromosome 11"/>
</dbReference>
<dbReference type="RNAct" id="P53634">
    <property type="molecule type" value="protein"/>
</dbReference>
<dbReference type="Bgee" id="ENSG00000109861">
    <property type="expression patterns" value="Expressed in palpebral conjunctiva and 203 other cell types or tissues"/>
</dbReference>
<dbReference type="ExpressionAtlas" id="P53634">
    <property type="expression patterns" value="baseline and differential"/>
</dbReference>
<dbReference type="GO" id="GO:0035578">
    <property type="term" value="C:azurophil granule lumen"/>
    <property type="evidence" value="ECO:0000304"/>
    <property type="project" value="Reactome"/>
</dbReference>
<dbReference type="GO" id="GO:0005813">
    <property type="term" value="C:centrosome"/>
    <property type="evidence" value="ECO:0000314"/>
    <property type="project" value="HPA"/>
</dbReference>
<dbReference type="GO" id="GO:0062023">
    <property type="term" value="C:collagen-containing extracellular matrix"/>
    <property type="evidence" value="ECO:0007005"/>
    <property type="project" value="BHF-UCL"/>
</dbReference>
<dbReference type="GO" id="GO:0030134">
    <property type="term" value="C:COPII-coated ER to Golgi transport vesicle"/>
    <property type="evidence" value="ECO:0000304"/>
    <property type="project" value="Reactome"/>
</dbReference>
<dbReference type="GO" id="GO:0005788">
    <property type="term" value="C:endoplasmic reticulum lumen"/>
    <property type="evidence" value="ECO:0000304"/>
    <property type="project" value="Reactome"/>
</dbReference>
<dbReference type="GO" id="GO:0033116">
    <property type="term" value="C:endoplasmic reticulum-Golgi intermediate compartment membrane"/>
    <property type="evidence" value="ECO:0000304"/>
    <property type="project" value="Reactome"/>
</dbReference>
<dbReference type="GO" id="GO:0070062">
    <property type="term" value="C:extracellular exosome"/>
    <property type="evidence" value="ECO:0007005"/>
    <property type="project" value="UniProtKB"/>
</dbReference>
<dbReference type="GO" id="GO:0005576">
    <property type="term" value="C:extracellular region"/>
    <property type="evidence" value="ECO:0000304"/>
    <property type="project" value="Reactome"/>
</dbReference>
<dbReference type="GO" id="GO:0005615">
    <property type="term" value="C:extracellular space"/>
    <property type="evidence" value="ECO:0007005"/>
    <property type="project" value="UniProtKB"/>
</dbReference>
<dbReference type="GO" id="GO:0043231">
    <property type="term" value="C:intracellular membrane-bounded organelle"/>
    <property type="evidence" value="ECO:0000314"/>
    <property type="project" value="HPA"/>
</dbReference>
<dbReference type="GO" id="GO:0005764">
    <property type="term" value="C:lysosome"/>
    <property type="evidence" value="ECO:0000250"/>
    <property type="project" value="BHF-UCL"/>
</dbReference>
<dbReference type="GO" id="GO:0016020">
    <property type="term" value="C:membrane"/>
    <property type="evidence" value="ECO:0007005"/>
    <property type="project" value="UniProtKB"/>
</dbReference>
<dbReference type="GO" id="GO:0005654">
    <property type="term" value="C:nucleoplasm"/>
    <property type="evidence" value="ECO:0000314"/>
    <property type="project" value="HPA"/>
</dbReference>
<dbReference type="GO" id="GO:0031404">
    <property type="term" value="F:chloride ion binding"/>
    <property type="evidence" value="ECO:0007669"/>
    <property type="project" value="Ensembl"/>
</dbReference>
<dbReference type="GO" id="GO:0004197">
    <property type="term" value="F:cysteine-type endopeptidase activity"/>
    <property type="evidence" value="ECO:0000318"/>
    <property type="project" value="GO_Central"/>
</dbReference>
<dbReference type="GO" id="GO:0008234">
    <property type="term" value="F:cysteine-type peptidase activity"/>
    <property type="evidence" value="ECO:0000314"/>
    <property type="project" value="UniProtKB"/>
</dbReference>
<dbReference type="GO" id="GO:0008239">
    <property type="term" value="F:dipeptidyl-peptidase activity"/>
    <property type="evidence" value="ECO:0007669"/>
    <property type="project" value="UniProtKB-EC"/>
</dbReference>
<dbReference type="GO" id="GO:0042802">
    <property type="term" value="F:identical protein binding"/>
    <property type="evidence" value="ECO:0007669"/>
    <property type="project" value="Ensembl"/>
</dbReference>
<dbReference type="GO" id="GO:0016505">
    <property type="term" value="F:peptidase activator activity involved in apoptotic process"/>
    <property type="evidence" value="ECO:0007669"/>
    <property type="project" value="Ensembl"/>
</dbReference>
<dbReference type="GO" id="GO:0019902">
    <property type="term" value="F:phosphatase binding"/>
    <property type="evidence" value="ECO:0000250"/>
    <property type="project" value="BHF-UCL"/>
</dbReference>
<dbReference type="GO" id="GO:0051087">
    <property type="term" value="F:protein-folding chaperone binding"/>
    <property type="evidence" value="ECO:0000250"/>
    <property type="project" value="BHF-UCL"/>
</dbReference>
<dbReference type="GO" id="GO:0004252">
    <property type="term" value="F:serine-type endopeptidase activity"/>
    <property type="evidence" value="ECO:0007669"/>
    <property type="project" value="Ensembl"/>
</dbReference>
<dbReference type="GO" id="GO:0006955">
    <property type="term" value="P:immune response"/>
    <property type="evidence" value="ECO:0000304"/>
    <property type="project" value="ProtInc"/>
</dbReference>
<dbReference type="GO" id="GO:0031642">
    <property type="term" value="P:negative regulation of myelination"/>
    <property type="evidence" value="ECO:0007669"/>
    <property type="project" value="Ensembl"/>
</dbReference>
<dbReference type="GO" id="GO:2001235">
    <property type="term" value="P:positive regulation of apoptotic signaling pathway"/>
    <property type="evidence" value="ECO:0007669"/>
    <property type="project" value="Ensembl"/>
</dbReference>
<dbReference type="GO" id="GO:1903980">
    <property type="term" value="P:positive regulation of microglial cell activation"/>
    <property type="evidence" value="ECO:0007669"/>
    <property type="project" value="Ensembl"/>
</dbReference>
<dbReference type="GO" id="GO:1903052">
    <property type="term" value="P:positive regulation of proteolysis involved in protein catabolic process"/>
    <property type="evidence" value="ECO:0000250"/>
    <property type="project" value="BHF-UCL"/>
</dbReference>
<dbReference type="GO" id="GO:0006508">
    <property type="term" value="P:proteolysis"/>
    <property type="evidence" value="ECO:0000314"/>
    <property type="project" value="UniProtKB"/>
</dbReference>
<dbReference type="GO" id="GO:0051603">
    <property type="term" value="P:proteolysis involved in protein catabolic process"/>
    <property type="evidence" value="ECO:0000318"/>
    <property type="project" value="GO_Central"/>
</dbReference>
<dbReference type="GO" id="GO:0001913">
    <property type="term" value="P:T cell mediated cytotoxicity"/>
    <property type="evidence" value="ECO:0007669"/>
    <property type="project" value="Ensembl"/>
</dbReference>
<dbReference type="CDD" id="cd02621">
    <property type="entry name" value="Peptidase_C1A_CathepsinC"/>
    <property type="match status" value="1"/>
</dbReference>
<dbReference type="FunFam" id="2.40.128.80:FF:000001">
    <property type="entry name" value="Dipeptidyl peptidase 1"/>
    <property type="match status" value="1"/>
</dbReference>
<dbReference type="FunFam" id="3.90.70.10:FF:000062">
    <property type="entry name" value="Dipeptidyl peptidase 1"/>
    <property type="match status" value="1"/>
</dbReference>
<dbReference type="Gene3D" id="2.40.128.80">
    <property type="entry name" value="Cathepsin C, exclusion domain"/>
    <property type="match status" value="1"/>
</dbReference>
<dbReference type="Gene3D" id="3.90.70.10">
    <property type="entry name" value="Cysteine proteinases"/>
    <property type="match status" value="1"/>
</dbReference>
<dbReference type="InterPro" id="IPR039412">
    <property type="entry name" value="CatC"/>
</dbReference>
<dbReference type="InterPro" id="IPR014882">
    <property type="entry name" value="CathepsinC_exc"/>
</dbReference>
<dbReference type="InterPro" id="IPR036496">
    <property type="entry name" value="CathepsinC_exc_dom_sf"/>
</dbReference>
<dbReference type="InterPro" id="IPR038765">
    <property type="entry name" value="Papain-like_cys_pep_sf"/>
</dbReference>
<dbReference type="InterPro" id="IPR025661">
    <property type="entry name" value="Pept_asp_AS"/>
</dbReference>
<dbReference type="InterPro" id="IPR000169">
    <property type="entry name" value="Pept_cys_AS"/>
</dbReference>
<dbReference type="InterPro" id="IPR025660">
    <property type="entry name" value="Pept_his_AS"/>
</dbReference>
<dbReference type="InterPro" id="IPR013128">
    <property type="entry name" value="Peptidase_C1A"/>
</dbReference>
<dbReference type="InterPro" id="IPR000668">
    <property type="entry name" value="Peptidase_C1A_C"/>
</dbReference>
<dbReference type="PANTHER" id="PTHR12411">
    <property type="entry name" value="CYSTEINE PROTEASE FAMILY C1-RELATED"/>
    <property type="match status" value="1"/>
</dbReference>
<dbReference type="Pfam" id="PF08773">
    <property type="entry name" value="CathepsinC_exc"/>
    <property type="match status" value="1"/>
</dbReference>
<dbReference type="Pfam" id="PF00112">
    <property type="entry name" value="Peptidase_C1"/>
    <property type="match status" value="1"/>
</dbReference>
<dbReference type="PRINTS" id="PR00705">
    <property type="entry name" value="PAPAIN"/>
</dbReference>
<dbReference type="SMART" id="SM00645">
    <property type="entry name" value="Pept_C1"/>
    <property type="match status" value="1"/>
</dbReference>
<dbReference type="SUPFAM" id="SSF54001">
    <property type="entry name" value="Cysteine proteinases"/>
    <property type="match status" value="1"/>
</dbReference>
<dbReference type="SUPFAM" id="SSF75001">
    <property type="entry name" value="Dipeptidyl peptidase I (cathepsin C), exclusion domain"/>
    <property type="match status" value="1"/>
</dbReference>
<dbReference type="PROSITE" id="PS00640">
    <property type="entry name" value="THIOL_PROTEASE_ASN"/>
    <property type="match status" value="1"/>
</dbReference>
<dbReference type="PROSITE" id="PS00139">
    <property type="entry name" value="THIOL_PROTEASE_CYS"/>
    <property type="match status" value="1"/>
</dbReference>
<dbReference type="PROSITE" id="PS00639">
    <property type="entry name" value="THIOL_PROTEASE_HIS"/>
    <property type="match status" value="1"/>
</dbReference>
<feature type="signal peptide" evidence="7 25 28">
    <location>
        <begin position="1"/>
        <end position="24"/>
    </location>
</feature>
<feature type="chain" id="PRO_0000026338" description="Dipeptidyl peptidase 1 exclusion domain chain">
    <location>
        <begin position="25"/>
        <end position="134"/>
    </location>
</feature>
<feature type="propeptide" id="PRO_0000026339" evidence="19 25 28">
    <location>
        <begin position="135"/>
        <end position="230"/>
    </location>
</feature>
<feature type="chain" id="PRO_0000026340" description="Dipeptidyl peptidase 1 heavy chain">
    <location>
        <begin position="231"/>
        <end position="394"/>
    </location>
</feature>
<feature type="chain" id="PRO_0000026341" description="Dipeptidyl peptidase 1 light chain">
    <location>
        <begin position="395"/>
        <end position="463"/>
    </location>
</feature>
<feature type="active site" evidence="1">
    <location>
        <position position="258"/>
    </location>
</feature>
<feature type="active site" evidence="2">
    <location>
        <position position="405"/>
    </location>
</feature>
<feature type="active site" evidence="3">
    <location>
        <position position="427"/>
    </location>
</feature>
<feature type="binding site" evidence="12 36">
    <location>
        <position position="302"/>
    </location>
    <ligand>
        <name>chloride</name>
        <dbReference type="ChEBI" id="CHEBI:17996"/>
    </ligand>
</feature>
<feature type="binding site" evidence="12 36">
    <location>
        <position position="304"/>
    </location>
    <ligand>
        <name>chloride</name>
        <dbReference type="ChEBI" id="CHEBI:17996"/>
    </ligand>
</feature>
<feature type="binding site" evidence="12 36">
    <location>
        <position position="347"/>
    </location>
    <ligand>
        <name>chloride</name>
        <dbReference type="ChEBI" id="CHEBI:17996"/>
    </ligand>
</feature>
<feature type="glycosylation site" description="N-linked (GlcNAc...) asparagine" evidence="12 22">
    <location>
        <position position="29"/>
    </location>
</feature>
<feature type="glycosylation site" description="N-linked (GlcNAc...) asparagine" evidence="21 22">
    <location>
        <position position="53"/>
    </location>
</feature>
<feature type="glycosylation site" description="N-linked (GlcNAc...) asparagine" evidence="22">
    <location>
        <position position="119"/>
    </location>
</feature>
<feature type="glycosylation site" description="N-linked (GlcNAc...) asparagine" evidence="22">
    <location>
        <position position="276"/>
    </location>
</feature>
<feature type="disulfide bond" evidence="12 36">
    <location>
        <begin position="30"/>
        <end position="118"/>
    </location>
</feature>
<feature type="disulfide bond" evidence="12 36">
    <location>
        <begin position="54"/>
        <end position="136"/>
    </location>
</feature>
<feature type="disulfide bond" evidence="12 36">
    <location>
        <begin position="255"/>
        <end position="298"/>
    </location>
</feature>
<feature type="disulfide bond" evidence="12 36">
    <location>
        <begin position="291"/>
        <end position="331"/>
    </location>
</feature>
<feature type="disulfide bond" evidence="12 36">
    <location>
        <begin position="321"/>
        <end position="337"/>
    </location>
</feature>
<feature type="splice variant" id="VSP_043232" description="In isoform 3." evidence="32">
    <original>YKEEGSKVTTYCNETMTGWVHDVLGRNWACFTGKK</original>
    <variation>DVTDFISHLFMQLGTVGIYDLPHLRNKLAMNRRWG</variation>
    <location>
        <begin position="107"/>
        <end position="141"/>
    </location>
</feature>
<feature type="splice variant" id="VSP_039123" description="In isoform 2." evidence="31 32 33">
    <original>YKEEGSKVTTYCNETMTGWVHDVLGRNWACF</original>
    <variation>DVTDFISHLFMQLGTVGIYDLPHLRNKLVIK</variation>
    <location>
        <begin position="107"/>
        <end position="137"/>
    </location>
</feature>
<feature type="splice variant" id="VSP_039124" description="In isoform 2." evidence="31 32 33">
    <location>
        <begin position="138"/>
        <end position="463"/>
    </location>
</feature>
<feature type="splice variant" id="VSP_043233" description="In isoform 3." evidence="32">
    <location>
        <begin position="142"/>
        <end position="463"/>
    </location>
</feature>
<feature type="sequence variant" id="VAR_016933" description="In PLS; dbSNP:rs104894210." evidence="10">
    <original>W</original>
    <variation>S</variation>
    <location>
        <position position="39"/>
    </location>
</feature>
<feature type="sequence variant" id="VAR_019035" description="In PLS." evidence="8">
    <location>
        <begin position="67"/>
        <end position="74"/>
    </location>
</feature>
<feature type="sequence variant" id="VAR_016934" description="In PLS; dbSNP:rs104894216." evidence="13">
    <original>H</original>
    <variation>P</variation>
    <location>
        <position position="127"/>
    </location>
</feature>
<feature type="sequence variant" id="VAR_019036" description="In PLS; dbSNP:rs760130711." evidence="17">
    <original>V</original>
    <variation>E</variation>
    <location>
        <position position="129"/>
    </location>
</feature>
<feature type="sequence variant" id="VAR_019037" description="In PLS; dbSNP:rs749103588." evidence="14 17">
    <original>G</original>
    <variation>R</variation>
    <location>
        <position position="139"/>
    </location>
</feature>
<feature type="sequence variant" id="VAR_016943" description="In dbSNP:rs217086." evidence="8 11 13 14 15 16 17 19 24 27 29 30">
    <original>I</original>
    <variation>T</variation>
    <location>
        <position position="153"/>
    </location>
</feature>
<feature type="sequence variant" id="VAR_019038" description="In PLS; dbSNP:rs764724707." evidence="11 17">
    <original>D</original>
    <variation>Y</variation>
    <location>
        <position position="236"/>
    </location>
</feature>
<feature type="sequence variant" id="VAR_009541" description="In PLS." evidence="4 17">
    <original>V</original>
    <variation>F</variation>
    <location>
        <position position="249"/>
    </location>
</feature>
<feature type="sequence variant" id="VAR_009542" description="In PLS; dbSNP:rs104894207." evidence="4 17">
    <original>Q</original>
    <variation>L</variation>
    <location>
        <position position="252"/>
    </location>
</feature>
<feature type="sequence variant" id="VAR_019039" description="In PLS; dbSNP:rs587777534." evidence="17">
    <original>R</original>
    <variation>H</variation>
    <location>
        <position position="272"/>
    </location>
</feature>
<feature type="sequence variant" id="VAR_009543" description="In PLS; dbSNP:rs587777534." evidence="4 8 9 13 14">
    <original>R</original>
    <variation>P</variation>
    <location>
        <position position="272"/>
    </location>
</feature>
<feature type="sequence variant" id="VAR_016935" description="In HMS and PLS; dbSNP:rs104894208." evidence="5 11">
    <original>Q</original>
    <variation>R</variation>
    <location>
        <position position="286"/>
    </location>
</feature>
<feature type="sequence variant" id="VAR_019040" description="In PLS; dbSNP:rs748729285." evidence="11">
    <original>C</original>
    <variation>Y</variation>
    <location>
        <position position="291"/>
    </location>
</feature>
<feature type="sequence variant" id="VAR_039686" description="In PLS." evidence="15">
    <original>Y</original>
    <variation>H</variation>
    <location>
        <position position="294"/>
    </location>
</feature>
<feature type="sequence variant" id="VAR_019041" description="In PLS." evidence="9 23">
    <original>G</original>
    <variation>D</variation>
    <location>
        <position position="300"/>
    </location>
</feature>
<feature type="sequence variant" id="VAR_019042" description="In PLS." evidence="8">
    <original>G</original>
    <variation>S</variation>
    <location>
        <position position="300"/>
    </location>
</feature>
<feature type="sequence variant" id="VAR_009544" description="In PLS; dbSNP:rs104894214." evidence="4 8 10 17">
    <original>G</original>
    <variation>S</variation>
    <location>
        <position position="301"/>
    </location>
</feature>
<feature type="sequence variant" id="VAR_019043" description="In PLS." evidence="8">
    <original>G</original>
    <variation>V</variation>
    <location>
        <position position="301"/>
    </location>
</feature>
<feature type="sequence variant" id="VAR_019044" description="In PLS." evidence="8">
    <original>Y</original>
    <variation>N</variation>
    <location>
        <position position="304"/>
    </location>
</feature>
<feature type="sequence variant" id="VAR_019045" description="In PLS; dbSNP:rs1484758757." evidence="17">
    <original>Q</original>
    <variation>R</variation>
    <location>
        <position position="312"/>
    </location>
</feature>
<feature type="sequence variant" id="VAR_019046" description="In PLS; dbSNP:rs1294233227." evidence="8">
    <original>E</original>
    <variation>G</variation>
    <location>
        <position position="319"/>
    </location>
</feature>
<feature type="sequence variant" id="VAR_009545" description="In PLS; dbSNP:rs1044703733." evidence="4 6 8 13 17">
    <original>R</original>
    <variation>C</variation>
    <location>
        <position position="339"/>
    </location>
</feature>
<feature type="sequence variant" id="VAR_016944" description="In PLS." evidence="6 8">
    <original>Y</original>
    <variation>C</variation>
    <location>
        <position position="340"/>
    </location>
</feature>
<feature type="sequence variant" id="VAR_009546" description="In PLS and AP1; dbSNP:rs104894211." evidence="4 6 17">
    <original>Y</original>
    <variation>C</variation>
    <location>
        <position position="347"/>
    </location>
</feature>
<feature type="sequence variant" id="VAR_016945" description="In dbSNP:rs200627023." evidence="13">
    <original>E</original>
    <variation>K</variation>
    <location>
        <position position="401"/>
    </location>
</feature>
<feature type="sequence variant" id="VAR_027249" description="In PLS." evidence="18">
    <original>H</original>
    <variation>N</variation>
    <location>
        <position position="405"/>
    </location>
</feature>
<feature type="sequence variant" id="VAR_027250" description="In PLS; dbSNP:rs151269219." evidence="20">
    <original>H</original>
    <variation>R</variation>
    <location>
        <position position="405"/>
    </location>
</feature>
<feature type="sequence variant" id="VAR_019047" description="In AP1; dbSNP:rs28937571." evidence="17">
    <original>Y</original>
    <variation>C</variation>
    <location>
        <position position="412"/>
    </location>
</feature>
<feature type="sequence variant" id="VAR_016936" description="In PLS; dbSNP:rs104894215." evidence="13">
    <original>W</original>
    <variation>C</variation>
    <location>
        <position position="429"/>
    </location>
</feature>
<feature type="sequence variant" id="VAR_019048" description="In PLS." evidence="8 17">
    <original>E</original>
    <variation>G</variation>
    <location>
        <position position="447"/>
    </location>
</feature>
<feature type="sequence variant" id="VAR_016946" description="In dbSNP:rs3888798." evidence="10">
    <original>I</original>
    <variation>V</variation>
    <location>
        <position position="453"/>
    </location>
</feature>
<feature type="sequence conflict" description="In Ref. 6; BAD96758." evidence="34" ref="6">
    <original>K</original>
    <variation>I</variation>
    <location>
        <position position="63"/>
    </location>
</feature>
<feature type="sequence conflict" description="In Ref. 14; AA sequence." evidence="34" ref="14">
    <original>W</original>
    <variation>V</variation>
    <location>
        <position position="237"/>
    </location>
</feature>
<feature type="sequence conflict" description="In Ref. 14; AA sequence." evidence="34" ref="14">
    <original>C</original>
    <variation>S</variation>
    <location>
        <position position="321"/>
    </location>
</feature>
<feature type="sequence conflict" description="In Ref. 14; AA sequence." evidence="34" ref="14">
    <original>C</original>
    <variation>M</variation>
    <location>
        <position position="355"/>
    </location>
</feature>
<feature type="sequence conflict" description="In Ref. 14; AA sequence." evidence="34" ref="14">
    <original>H</original>
    <variation>R</variation>
    <location>
        <position position="366"/>
    </location>
</feature>
<feature type="sequence conflict" description="In Ref. 14; AA sequence." evidence="34" ref="14">
    <original>VYD</original>
    <variation>YVY</variation>
    <location>
        <begin position="376"/>
        <end position="378"/>
    </location>
</feature>
<feature type="helix" evidence="41">
    <location>
        <begin position="32"/>
        <end position="35"/>
    </location>
</feature>
<feature type="strand" evidence="41">
    <location>
        <begin position="37"/>
        <end position="48"/>
    </location>
</feature>
<feature type="turn" evidence="37">
    <location>
        <begin position="49"/>
        <end position="51"/>
    </location>
</feature>
<feature type="helix" evidence="41">
    <location>
        <begin position="54"/>
        <end position="56"/>
    </location>
</feature>
<feature type="strand" evidence="41">
    <location>
        <begin position="60"/>
        <end position="69"/>
    </location>
</feature>
<feature type="turn" evidence="41">
    <location>
        <begin position="70"/>
        <end position="72"/>
    </location>
</feature>
<feature type="strand" evidence="41">
    <location>
        <begin position="73"/>
        <end position="75"/>
    </location>
</feature>
<feature type="strand" evidence="41">
    <location>
        <begin position="81"/>
        <end position="87"/>
    </location>
</feature>
<feature type="turn" evidence="41">
    <location>
        <begin position="88"/>
        <end position="90"/>
    </location>
</feature>
<feature type="strand" evidence="41">
    <location>
        <begin position="91"/>
        <end position="96"/>
    </location>
</feature>
<feature type="strand" evidence="41">
    <location>
        <begin position="99"/>
        <end position="110"/>
    </location>
</feature>
<feature type="strand" evidence="41">
    <location>
        <begin position="113"/>
        <end position="121"/>
    </location>
</feature>
<feature type="strand" evidence="41">
    <location>
        <begin position="123"/>
        <end position="128"/>
    </location>
</feature>
<feature type="strand" evidence="41">
    <location>
        <begin position="133"/>
        <end position="141"/>
    </location>
</feature>
<feature type="strand" evidence="38">
    <location>
        <begin position="254"/>
        <end position="256"/>
    </location>
</feature>
<feature type="helix" evidence="41">
    <location>
        <begin position="258"/>
        <end position="274"/>
    </location>
</feature>
<feature type="turn" evidence="41">
    <location>
        <begin position="275"/>
        <end position="277"/>
    </location>
</feature>
<feature type="helix" evidence="41">
    <location>
        <begin position="285"/>
        <end position="291"/>
    </location>
</feature>
<feature type="helix" evidence="42">
    <location>
        <begin position="297"/>
        <end position="299"/>
    </location>
</feature>
<feature type="helix" evidence="41">
    <location>
        <begin position="303"/>
        <end position="306"/>
    </location>
</feature>
<feature type="helix" evidence="41">
    <location>
        <begin position="309"/>
        <end position="313"/>
    </location>
</feature>
<feature type="helix" evidence="41">
    <location>
        <begin position="319"/>
        <end position="321"/>
    </location>
</feature>
<feature type="strand" evidence="41">
    <location>
        <begin position="342"/>
        <end position="347"/>
    </location>
</feature>
<feature type="helix" evidence="41">
    <location>
        <begin position="357"/>
        <end position="367"/>
    </location>
</feature>
<feature type="strand" evidence="41">
    <location>
        <begin position="370"/>
        <end position="374"/>
    </location>
</feature>
<feature type="helix" evidence="41">
    <location>
        <begin position="378"/>
        <end position="382"/>
    </location>
</feature>
<feature type="strand" evidence="41">
    <location>
        <begin position="385"/>
        <end position="388"/>
    </location>
</feature>
<feature type="strand" evidence="41">
    <location>
        <begin position="405"/>
        <end position="414"/>
    </location>
</feature>
<feature type="turn" evidence="41">
    <location>
        <begin position="416"/>
        <end position="418"/>
    </location>
</feature>
<feature type="strand" evidence="41">
    <location>
        <begin position="421"/>
        <end position="426"/>
    </location>
</feature>
<feature type="strand" evidence="39">
    <location>
        <begin position="431"/>
        <end position="433"/>
    </location>
</feature>
<feature type="strand" evidence="41">
    <location>
        <begin position="438"/>
        <end position="442"/>
    </location>
</feature>
<feature type="turn" evidence="40">
    <location>
        <begin position="443"/>
        <end position="446"/>
    </location>
</feature>
<feature type="helix" evidence="41">
    <location>
        <begin position="447"/>
        <end position="449"/>
    </location>
</feature>
<feature type="strand" evidence="41">
    <location>
        <begin position="455"/>
        <end position="459"/>
    </location>
</feature>
<sequence length="463" mass="51854">MGAGPSLLLAALLLLLSGDGAVRCDTPANCTYLDLLGTWVFQVGSSGSQRDVNCSVMGPQEKKVVVYLQKLDTAYDDLGNSGHFTIIYNQGFEIVLNDYKWFAFFKYKEEGSKVTTYCNETMTGWVHDVLGRNWACFTGKKVGTASENVYVNIAHLKNSQEKYSNRLYKYDHNFVKAINAIQKSWTATTYMEYETLTLGDMIRRSGGHSRKIPRPKPAPLTAEIQQKILHLPTSWDWRNVHGINFVSPVRNQASCGSCYSFASMGMLEARIRILTNNSQTPILSPQEVVSCSQYAQGCEGGFPYLIAGKYAQDFGLVEEACFPYTGTDSPCKMKEDCFRYYSSEYHYVGGFYGGCNEALMKLELVHHGPMAVAFEVYDDFLHYKKGIYHHTGLRDPFNPFELTNHAVLLVGYGTDSASGMDYWIVKNSWGTGWGENGYFRIRRGTDECAIESIAVAATPIPKL</sequence>
<keyword id="KW-0002">3D-structure</keyword>
<keyword id="KW-0025">Alternative splicing</keyword>
<keyword id="KW-0868">Chloride</keyword>
<keyword id="KW-0903">Direct protein sequencing</keyword>
<keyword id="KW-0225">Disease variant</keyword>
<keyword id="KW-1015">Disulfide bond</keyword>
<keyword id="KW-0325">Glycoprotein</keyword>
<keyword id="KW-0378">Hydrolase</keyword>
<keyword id="KW-0458">Lysosome</keyword>
<keyword id="KW-1007">Palmoplantar keratoderma</keyword>
<keyword id="KW-0645">Protease</keyword>
<keyword id="KW-1267">Proteomics identification</keyword>
<keyword id="KW-1185">Reference proteome</keyword>
<keyword id="KW-0732">Signal</keyword>
<keyword id="KW-0788">Thiol protease</keyword>
<keyword id="KW-0865">Zymogen</keyword>
<protein>
    <recommendedName>
        <fullName>Dipeptidyl peptidase 1</fullName>
        <ecNumber evidence="19">3.4.14.1</ecNumber>
    </recommendedName>
    <alternativeName>
        <fullName>Cathepsin C</fullName>
    </alternativeName>
    <alternativeName>
        <fullName>Cathepsin J</fullName>
    </alternativeName>
    <alternativeName>
        <fullName>Dipeptidyl peptidase I</fullName>
        <shortName>DPP-I</shortName>
        <shortName>DPPI</shortName>
    </alternativeName>
    <alternativeName>
        <fullName>Dipeptidyl transferase</fullName>
    </alternativeName>
    <component>
        <recommendedName>
            <fullName>Dipeptidyl peptidase 1 exclusion domain chain</fullName>
        </recommendedName>
        <alternativeName>
            <fullName>Dipeptidyl peptidase I exclusion domain chain</fullName>
        </alternativeName>
    </component>
    <component>
        <recommendedName>
            <fullName>Dipeptidyl peptidase 1 heavy chain</fullName>
        </recommendedName>
        <alternativeName>
            <fullName>Dipeptidyl peptidase I heavy chain</fullName>
        </alternativeName>
    </component>
    <component>
        <recommendedName>
            <fullName>Dipeptidyl peptidase 1 light chain</fullName>
        </recommendedName>
        <alternativeName>
            <fullName>Dipeptidyl peptidase I light chain</fullName>
        </alternativeName>
    </component>
</protein>
<evidence type="ECO:0000255" key="1">
    <source>
        <dbReference type="PROSITE-ProRule" id="PRU10088"/>
    </source>
</evidence>
<evidence type="ECO:0000255" key="2">
    <source>
        <dbReference type="PROSITE-ProRule" id="PRU10089"/>
    </source>
</evidence>
<evidence type="ECO:0000255" key="3">
    <source>
        <dbReference type="PROSITE-ProRule" id="PRU10090"/>
    </source>
</evidence>
<evidence type="ECO:0000269" key="4">
    <source>
    </source>
</evidence>
<evidence type="ECO:0000269" key="5">
    <source>
    </source>
</evidence>
<evidence type="ECO:0000269" key="6">
    <source>
    </source>
</evidence>
<evidence type="ECO:0000269" key="7">
    <source>
    </source>
</evidence>
<evidence type="ECO:0000269" key="8">
    <source>
    </source>
</evidence>
<evidence type="ECO:0000269" key="9">
    <source>
    </source>
</evidence>
<evidence type="ECO:0000269" key="10">
    <source>
    </source>
</evidence>
<evidence type="ECO:0000269" key="11">
    <source>
    </source>
</evidence>
<evidence type="ECO:0000269" key="12">
    <source>
    </source>
</evidence>
<evidence type="ECO:0000269" key="13">
    <source>
    </source>
</evidence>
<evidence type="ECO:0000269" key="14">
    <source>
    </source>
</evidence>
<evidence type="ECO:0000269" key="15">
    <source>
    </source>
</evidence>
<evidence type="ECO:0000269" key="16">
    <source>
    </source>
</evidence>
<evidence type="ECO:0000269" key="17">
    <source>
    </source>
</evidence>
<evidence type="ECO:0000269" key="18">
    <source>
    </source>
</evidence>
<evidence type="ECO:0000269" key="19">
    <source>
    </source>
</evidence>
<evidence type="ECO:0000269" key="20">
    <source>
    </source>
</evidence>
<evidence type="ECO:0000269" key="21">
    <source>
    </source>
</evidence>
<evidence type="ECO:0000269" key="22">
    <source>
    </source>
</evidence>
<evidence type="ECO:0000269" key="23">
    <source>
    </source>
</evidence>
<evidence type="ECO:0000269" key="24">
    <source>
    </source>
</evidence>
<evidence type="ECO:0000269" key="25">
    <source>
    </source>
</evidence>
<evidence type="ECO:0000269" key="26">
    <source>
    </source>
</evidence>
<evidence type="ECO:0000269" key="27">
    <source>
    </source>
</evidence>
<evidence type="ECO:0000269" key="28">
    <source>
    </source>
</evidence>
<evidence type="ECO:0000269" key="29">
    <source ref="6"/>
</evidence>
<evidence type="ECO:0000269" key="30">
    <source ref="9"/>
</evidence>
<evidence type="ECO:0000303" key="31">
    <source>
    </source>
</evidence>
<evidence type="ECO:0000303" key="32">
    <source>
    </source>
</evidence>
<evidence type="ECO:0000303" key="33">
    <source>
    </source>
</evidence>
<evidence type="ECO:0000305" key="34"/>
<evidence type="ECO:0000305" key="35">
    <source>
    </source>
</evidence>
<evidence type="ECO:0007744" key="36">
    <source>
        <dbReference type="PDB" id="1K3B"/>
    </source>
</evidence>
<evidence type="ECO:0007829" key="37">
    <source>
        <dbReference type="PDB" id="1K3B"/>
    </source>
</evidence>
<evidence type="ECO:0007829" key="38">
    <source>
        <dbReference type="PDB" id="2DJF"/>
    </source>
</evidence>
<evidence type="ECO:0007829" key="39">
    <source>
        <dbReference type="PDB" id="2DJG"/>
    </source>
</evidence>
<evidence type="ECO:0007829" key="40">
    <source>
        <dbReference type="PDB" id="4CDE"/>
    </source>
</evidence>
<evidence type="ECO:0007829" key="41">
    <source>
        <dbReference type="PDB" id="4OEL"/>
    </source>
</evidence>
<evidence type="ECO:0007829" key="42">
    <source>
        <dbReference type="PDB" id="4OEM"/>
    </source>
</evidence>